<reference key="1">
    <citation type="journal article" date="2002" name="Proc. Natl. Acad. Sci. U.S.A.">
        <title>Complete genome sequence and comparative genomic analysis of an emerging human pathogen, serotype V Streptococcus agalactiae.</title>
        <authorList>
            <person name="Tettelin H."/>
            <person name="Masignani V."/>
            <person name="Cieslewicz M.J."/>
            <person name="Eisen J.A."/>
            <person name="Peterson S.N."/>
            <person name="Wessels M.R."/>
            <person name="Paulsen I.T."/>
            <person name="Nelson K.E."/>
            <person name="Margarit I."/>
            <person name="Read T.D."/>
            <person name="Madoff L.C."/>
            <person name="Wolf A.M."/>
            <person name="Beanan M.J."/>
            <person name="Brinkac L.M."/>
            <person name="Daugherty S.C."/>
            <person name="DeBoy R.T."/>
            <person name="Durkin A.S."/>
            <person name="Kolonay J.F."/>
            <person name="Madupu R."/>
            <person name="Lewis M.R."/>
            <person name="Radune D."/>
            <person name="Fedorova N.B."/>
            <person name="Scanlan D."/>
            <person name="Khouri H.M."/>
            <person name="Mulligan S."/>
            <person name="Carty H.A."/>
            <person name="Cline R.T."/>
            <person name="Van Aken S.E."/>
            <person name="Gill J."/>
            <person name="Scarselli M."/>
            <person name="Mora M."/>
            <person name="Iacobini E.T."/>
            <person name="Brettoni C."/>
            <person name="Galli G."/>
            <person name="Mariani M."/>
            <person name="Vegni F."/>
            <person name="Maione D."/>
            <person name="Rinaudo D."/>
            <person name="Rappuoli R."/>
            <person name="Telford J.L."/>
            <person name="Kasper D.L."/>
            <person name="Grandi G."/>
            <person name="Fraser C.M."/>
        </authorList>
    </citation>
    <scope>NUCLEOTIDE SEQUENCE [LARGE SCALE GENOMIC DNA]</scope>
    <source>
        <strain>ATCC BAA-611 / 2603 V/R</strain>
    </source>
</reference>
<accession>Q8E0J5</accession>
<feature type="chain" id="PRO_0000058993" description="HPr kinase/phosphorylase">
    <location>
        <begin position="1"/>
        <end position="311"/>
    </location>
</feature>
<feature type="region of interest" description="Important for the catalytic mechanism of both phosphorylation and dephosphorylation" evidence="1">
    <location>
        <begin position="201"/>
        <end position="210"/>
    </location>
</feature>
<feature type="region of interest" description="Important for the catalytic mechanism of dephosphorylation" evidence="1">
    <location>
        <begin position="264"/>
        <end position="269"/>
    </location>
</feature>
<feature type="active site" evidence="1">
    <location>
        <position position="138"/>
    </location>
</feature>
<feature type="active site" evidence="1">
    <location>
        <position position="159"/>
    </location>
</feature>
<feature type="active site" description="Proton acceptor; for phosphorylation activity. Proton donor; for dephosphorylation activity" evidence="1">
    <location>
        <position position="177"/>
    </location>
</feature>
<feature type="active site" evidence="1">
    <location>
        <position position="243"/>
    </location>
</feature>
<feature type="binding site" evidence="1">
    <location>
        <begin position="153"/>
        <end position="160"/>
    </location>
    <ligand>
        <name>ATP</name>
        <dbReference type="ChEBI" id="CHEBI:30616"/>
    </ligand>
</feature>
<feature type="binding site" evidence="1">
    <location>
        <position position="160"/>
    </location>
    <ligand>
        <name>Mg(2+)</name>
        <dbReference type="ChEBI" id="CHEBI:18420"/>
    </ligand>
</feature>
<feature type="binding site" evidence="1">
    <location>
        <position position="202"/>
    </location>
    <ligand>
        <name>Mg(2+)</name>
        <dbReference type="ChEBI" id="CHEBI:18420"/>
    </ligand>
</feature>
<name>HPRK_STRA5</name>
<organism>
    <name type="scientific">Streptococcus agalactiae serotype V (strain ATCC BAA-611 / 2603 V/R)</name>
    <dbReference type="NCBI Taxonomy" id="208435"/>
    <lineage>
        <taxon>Bacteria</taxon>
        <taxon>Bacillati</taxon>
        <taxon>Bacillota</taxon>
        <taxon>Bacilli</taxon>
        <taxon>Lactobacillales</taxon>
        <taxon>Streptococcaceae</taxon>
        <taxon>Streptococcus</taxon>
    </lineage>
</organism>
<protein>
    <recommendedName>
        <fullName evidence="1">HPr kinase/phosphorylase</fullName>
        <shortName evidence="1">HPrK/P</shortName>
        <ecNumber evidence="1">2.7.11.-</ecNumber>
        <ecNumber evidence="1">2.7.4.-</ecNumber>
    </recommendedName>
    <alternativeName>
        <fullName evidence="1">HPr(Ser) kinase/phosphorylase</fullName>
    </alternativeName>
</protein>
<comment type="function">
    <text evidence="1">Catalyzes the ATP- as well as the pyrophosphate-dependent phosphorylation of a specific serine residue in HPr, a phosphocarrier protein of the phosphoenolpyruvate-dependent sugar phosphotransferase system (PTS). HprK/P also catalyzes the pyrophosphate-producing, inorganic phosphate-dependent dephosphorylation (phosphorolysis) of seryl-phosphorylated HPr (P-Ser-HPr). The two antagonistic activities of HprK/P are regulated by several intracellular metabolites, which change their concentration in response to the absence or presence of rapidly metabolisable carbon sources (glucose, fructose, etc.) in the growth medium. Therefore, by controlling the phosphorylation state of HPr, HPrK/P is a sensor enzyme that plays a major role in the regulation of carbon metabolism and sugar transport: it mediates carbon catabolite repression (CCR), and regulates PTS-catalyzed carbohydrate uptake and inducer exclusion.</text>
</comment>
<comment type="catalytic activity">
    <reaction evidence="1">
        <text>[HPr protein]-L-serine + ATP = [HPr protein]-O-phospho-L-serine + ADP + H(+)</text>
        <dbReference type="Rhea" id="RHEA:46600"/>
        <dbReference type="Rhea" id="RHEA-COMP:11602"/>
        <dbReference type="Rhea" id="RHEA-COMP:11603"/>
        <dbReference type="ChEBI" id="CHEBI:15378"/>
        <dbReference type="ChEBI" id="CHEBI:29999"/>
        <dbReference type="ChEBI" id="CHEBI:30616"/>
        <dbReference type="ChEBI" id="CHEBI:83421"/>
        <dbReference type="ChEBI" id="CHEBI:456216"/>
    </reaction>
</comment>
<comment type="catalytic activity">
    <reaction evidence="1">
        <text>[HPr protein]-O-phospho-L-serine + phosphate + H(+) = [HPr protein]-L-serine + diphosphate</text>
        <dbReference type="Rhea" id="RHEA:46604"/>
        <dbReference type="Rhea" id="RHEA-COMP:11602"/>
        <dbReference type="Rhea" id="RHEA-COMP:11603"/>
        <dbReference type="ChEBI" id="CHEBI:15378"/>
        <dbReference type="ChEBI" id="CHEBI:29999"/>
        <dbReference type="ChEBI" id="CHEBI:33019"/>
        <dbReference type="ChEBI" id="CHEBI:43474"/>
        <dbReference type="ChEBI" id="CHEBI:83421"/>
    </reaction>
</comment>
<comment type="cofactor">
    <cofactor evidence="1">
        <name>Mg(2+)</name>
        <dbReference type="ChEBI" id="CHEBI:18420"/>
    </cofactor>
</comment>
<comment type="subunit">
    <text evidence="1">Homohexamer.</text>
</comment>
<comment type="domain">
    <text evidence="1">The Walker A ATP-binding motif also binds Pi and PPi.</text>
</comment>
<comment type="miscellaneous">
    <text evidence="1">Both phosphorylation and phosphorolysis are carried out by the same active site and suggest a common mechanism for both reactions.</text>
</comment>
<comment type="similarity">
    <text evidence="1">Belongs to the HPrK/P family.</text>
</comment>
<proteinExistence type="inferred from homology"/>
<gene>
    <name evidence="1" type="primary">hprK</name>
    <name type="ordered locus">SAG0736</name>
</gene>
<keyword id="KW-0067">ATP-binding</keyword>
<keyword id="KW-0119">Carbohydrate metabolism</keyword>
<keyword id="KW-0418">Kinase</keyword>
<keyword id="KW-0460">Magnesium</keyword>
<keyword id="KW-0479">Metal-binding</keyword>
<keyword id="KW-0511">Multifunctional enzyme</keyword>
<keyword id="KW-0547">Nucleotide-binding</keyword>
<keyword id="KW-1185">Reference proteome</keyword>
<keyword id="KW-0723">Serine/threonine-protein kinase</keyword>
<keyword id="KW-0808">Transferase</keyword>
<sequence length="311" mass="34842">MAVTVQMLVDRLKLNVIYGDEHLLSKRITTADISRPGLEMTGYFDYYAPERLQLVGMKEWSYLMAMTGHNRYQVLREMFQKETPAIVVARDLEIPEEMYEAAKDTGIAILQSKAPTSRLSGEVSWYLDSCLAERTSVHGVLMDIYGMGVLIQGDSGIGKSETGLELVKRGHRLVADDRVDVYAKDEETLWGEPAEILRHLLEIRGVGIIDIMSLYGASAVKDSSQVQLAIYLENFETGKVFDRLGNGNEEIELSGVKVPRIRIPVKTGRNVSVVIEAAAMNHRAKQMGFDATQTFEDRLTHLISQNEVNDD</sequence>
<dbReference type="EC" id="2.7.11.-" evidence="1"/>
<dbReference type="EC" id="2.7.4.-" evidence="1"/>
<dbReference type="EMBL" id="AE009948">
    <property type="protein sequence ID" value="AAM99623.1"/>
    <property type="molecule type" value="Genomic_DNA"/>
</dbReference>
<dbReference type="RefSeq" id="NP_687751.1">
    <property type="nucleotide sequence ID" value="NC_004116.1"/>
</dbReference>
<dbReference type="RefSeq" id="WP_000301753.1">
    <property type="nucleotide sequence ID" value="NC_004116.1"/>
</dbReference>
<dbReference type="SMR" id="Q8E0J5"/>
<dbReference type="STRING" id="208435.SAG0736"/>
<dbReference type="GeneID" id="66885689"/>
<dbReference type="KEGG" id="sag:SAG0736"/>
<dbReference type="PATRIC" id="fig|208435.3.peg.742"/>
<dbReference type="HOGENOM" id="CLU_052030_0_1_9"/>
<dbReference type="OrthoDB" id="9778803at2"/>
<dbReference type="Proteomes" id="UP000000821">
    <property type="component" value="Chromosome"/>
</dbReference>
<dbReference type="GO" id="GO:0005524">
    <property type="term" value="F:ATP binding"/>
    <property type="evidence" value="ECO:0007669"/>
    <property type="project" value="UniProtKB-UniRule"/>
</dbReference>
<dbReference type="GO" id="GO:0000287">
    <property type="term" value="F:magnesium ion binding"/>
    <property type="evidence" value="ECO:0007669"/>
    <property type="project" value="UniProtKB-UniRule"/>
</dbReference>
<dbReference type="GO" id="GO:0000155">
    <property type="term" value="F:phosphorelay sensor kinase activity"/>
    <property type="evidence" value="ECO:0007669"/>
    <property type="project" value="InterPro"/>
</dbReference>
<dbReference type="GO" id="GO:0004674">
    <property type="term" value="F:protein serine/threonine kinase activity"/>
    <property type="evidence" value="ECO:0007669"/>
    <property type="project" value="UniProtKB-KW"/>
</dbReference>
<dbReference type="GO" id="GO:0004712">
    <property type="term" value="F:protein serine/threonine/tyrosine kinase activity"/>
    <property type="evidence" value="ECO:0007669"/>
    <property type="project" value="UniProtKB-UniRule"/>
</dbReference>
<dbReference type="GO" id="GO:0006109">
    <property type="term" value="P:regulation of carbohydrate metabolic process"/>
    <property type="evidence" value="ECO:0007669"/>
    <property type="project" value="UniProtKB-UniRule"/>
</dbReference>
<dbReference type="CDD" id="cd01918">
    <property type="entry name" value="HprK_C"/>
    <property type="match status" value="1"/>
</dbReference>
<dbReference type="FunFam" id="3.40.50.300:FF:000174">
    <property type="entry name" value="HPr kinase/phosphorylase"/>
    <property type="match status" value="1"/>
</dbReference>
<dbReference type="Gene3D" id="3.40.1390.20">
    <property type="entry name" value="HprK N-terminal domain-like"/>
    <property type="match status" value="1"/>
</dbReference>
<dbReference type="Gene3D" id="3.40.50.300">
    <property type="entry name" value="P-loop containing nucleotide triphosphate hydrolases"/>
    <property type="match status" value="1"/>
</dbReference>
<dbReference type="HAMAP" id="MF_01249">
    <property type="entry name" value="HPr_kinase"/>
    <property type="match status" value="1"/>
</dbReference>
<dbReference type="InterPro" id="IPR003755">
    <property type="entry name" value="HPr(Ser)_kin/Pase"/>
</dbReference>
<dbReference type="InterPro" id="IPR011104">
    <property type="entry name" value="Hpr_kin/Pase_C"/>
</dbReference>
<dbReference type="InterPro" id="IPR011126">
    <property type="entry name" value="Hpr_kin/Pase_Hpr_N"/>
</dbReference>
<dbReference type="InterPro" id="IPR027417">
    <property type="entry name" value="P-loop_NTPase"/>
</dbReference>
<dbReference type="InterPro" id="IPR028979">
    <property type="entry name" value="Ser_kin/Pase_Hpr-like_N_sf"/>
</dbReference>
<dbReference type="NCBIfam" id="TIGR00679">
    <property type="entry name" value="hpr-ser"/>
    <property type="match status" value="1"/>
</dbReference>
<dbReference type="PANTHER" id="PTHR30305:SF1">
    <property type="entry name" value="HPR KINASE_PHOSPHORYLASE"/>
    <property type="match status" value="1"/>
</dbReference>
<dbReference type="PANTHER" id="PTHR30305">
    <property type="entry name" value="PROTEIN YJDM-RELATED"/>
    <property type="match status" value="1"/>
</dbReference>
<dbReference type="Pfam" id="PF07475">
    <property type="entry name" value="Hpr_kinase_C"/>
    <property type="match status" value="1"/>
</dbReference>
<dbReference type="Pfam" id="PF02603">
    <property type="entry name" value="Hpr_kinase_N"/>
    <property type="match status" value="1"/>
</dbReference>
<dbReference type="SUPFAM" id="SSF75138">
    <property type="entry name" value="HprK N-terminal domain-like"/>
    <property type="match status" value="1"/>
</dbReference>
<dbReference type="SUPFAM" id="SSF53795">
    <property type="entry name" value="PEP carboxykinase-like"/>
    <property type="match status" value="1"/>
</dbReference>
<evidence type="ECO:0000255" key="1">
    <source>
        <dbReference type="HAMAP-Rule" id="MF_01249"/>
    </source>
</evidence>